<protein>
    <recommendedName>
        <fullName evidence="1">Trp operon repressor homolog</fullName>
    </recommendedName>
</protein>
<name>TRPR_HISS2</name>
<dbReference type="EMBL" id="CP000947">
    <property type="protein sequence ID" value="ACA30728.1"/>
    <property type="molecule type" value="Genomic_DNA"/>
</dbReference>
<dbReference type="RefSeq" id="WP_012340213.1">
    <property type="nucleotide sequence ID" value="NC_010519.1"/>
</dbReference>
<dbReference type="SMR" id="B0UT98"/>
<dbReference type="STRING" id="228400.HSM_1017"/>
<dbReference type="GeneID" id="31487316"/>
<dbReference type="KEGG" id="hsm:HSM_1017"/>
<dbReference type="HOGENOM" id="CLU_147939_0_0_6"/>
<dbReference type="GO" id="GO:0005737">
    <property type="term" value="C:cytoplasm"/>
    <property type="evidence" value="ECO:0007669"/>
    <property type="project" value="UniProtKB-SubCell"/>
</dbReference>
<dbReference type="GO" id="GO:0003700">
    <property type="term" value="F:DNA-binding transcription factor activity"/>
    <property type="evidence" value="ECO:0007669"/>
    <property type="project" value="InterPro"/>
</dbReference>
<dbReference type="GO" id="GO:0043565">
    <property type="term" value="F:sequence-specific DNA binding"/>
    <property type="evidence" value="ECO:0007669"/>
    <property type="project" value="InterPro"/>
</dbReference>
<dbReference type="GO" id="GO:0045892">
    <property type="term" value="P:negative regulation of DNA-templated transcription"/>
    <property type="evidence" value="ECO:0007669"/>
    <property type="project" value="UniProtKB-UniRule"/>
</dbReference>
<dbReference type="Gene3D" id="1.10.1270.10">
    <property type="entry name" value="TrpR-like"/>
    <property type="match status" value="1"/>
</dbReference>
<dbReference type="HAMAP" id="MF_00475">
    <property type="entry name" value="Trp_repressor"/>
    <property type="match status" value="1"/>
</dbReference>
<dbReference type="InterPro" id="IPR000831">
    <property type="entry name" value="Trp_repress"/>
</dbReference>
<dbReference type="InterPro" id="IPR013335">
    <property type="entry name" value="Trp_repress_bac"/>
</dbReference>
<dbReference type="InterPro" id="IPR010921">
    <property type="entry name" value="Trp_repressor/repl_initiator"/>
</dbReference>
<dbReference type="InterPro" id="IPR038116">
    <property type="entry name" value="TrpR-like_sf"/>
</dbReference>
<dbReference type="NCBIfam" id="TIGR01321">
    <property type="entry name" value="TrpR"/>
    <property type="match status" value="1"/>
</dbReference>
<dbReference type="PANTHER" id="PTHR38025">
    <property type="entry name" value="TRP OPERON REPRESSOR"/>
    <property type="match status" value="1"/>
</dbReference>
<dbReference type="PANTHER" id="PTHR38025:SF1">
    <property type="entry name" value="TRP OPERON REPRESSOR"/>
    <property type="match status" value="1"/>
</dbReference>
<dbReference type="Pfam" id="PF01371">
    <property type="entry name" value="Trp_repressor"/>
    <property type="match status" value="1"/>
</dbReference>
<dbReference type="PIRSF" id="PIRSF003196">
    <property type="entry name" value="Trp_repressor"/>
    <property type="match status" value="1"/>
</dbReference>
<dbReference type="SUPFAM" id="SSF48295">
    <property type="entry name" value="TrpR-like"/>
    <property type="match status" value="1"/>
</dbReference>
<evidence type="ECO:0000255" key="1">
    <source>
        <dbReference type="HAMAP-Rule" id="MF_00475"/>
    </source>
</evidence>
<feature type="chain" id="PRO_1000081254" description="Trp operon repressor homolog">
    <location>
        <begin position="1"/>
        <end position="106"/>
    </location>
</feature>
<feature type="DNA-binding region" evidence="1">
    <location>
        <begin position="59"/>
        <end position="82"/>
    </location>
</feature>
<accession>B0UT98</accession>
<reference key="1">
    <citation type="submission" date="2008-02" db="EMBL/GenBank/DDBJ databases">
        <title>Complete sequence of Haemophilus somnus 2336.</title>
        <authorList>
            <consortium name="US DOE Joint Genome Institute"/>
            <person name="Siddaramappa S."/>
            <person name="Duncan A.J."/>
            <person name="Challacombe J.F."/>
            <person name="Rainey D."/>
            <person name="Gillaspy A.F."/>
            <person name="Carson M."/>
            <person name="Gipson J."/>
            <person name="Gipson M."/>
            <person name="Bruce D."/>
            <person name="Detter J.C."/>
            <person name="Han C.S."/>
            <person name="Land M."/>
            <person name="Tapia R."/>
            <person name="Thompson L.S."/>
            <person name="Orvis J."/>
            <person name="Zaitshik J."/>
            <person name="Barnes G."/>
            <person name="Brettin T.S."/>
            <person name="Dyer D.W."/>
            <person name="Inzana T.J."/>
        </authorList>
    </citation>
    <scope>NUCLEOTIDE SEQUENCE [LARGE SCALE GENOMIC DNA]</scope>
    <source>
        <strain>2336</strain>
    </source>
</reference>
<sequence>MYISRNMEQWNEFLDLMRKAFEQGKEQELLTLLLTADERDAVALRVQIVSQLLDKSLAQREIQQILNTSAATITRGSNMIKIMPPEFMDWVKQQLNHNNKNELGGD</sequence>
<keyword id="KW-0963">Cytoplasm</keyword>
<keyword id="KW-0238">DNA-binding</keyword>
<keyword id="KW-0678">Repressor</keyword>
<keyword id="KW-0804">Transcription</keyword>
<keyword id="KW-0805">Transcription regulation</keyword>
<proteinExistence type="inferred from homology"/>
<gene>
    <name evidence="1" type="primary">trpR</name>
    <name type="ordered locus">HSM_1017</name>
</gene>
<comment type="function">
    <text evidence="1">This protein is an aporepressor. When complexed with L-tryptophan it binds the operator region of the trp operon and prevents the initiation of transcription.</text>
</comment>
<comment type="subunit">
    <text evidence="1">Homodimer.</text>
</comment>
<comment type="subcellular location">
    <subcellularLocation>
        <location evidence="1">Cytoplasm</location>
    </subcellularLocation>
</comment>
<comment type="similarity">
    <text evidence="1">Belongs to the TrpR family.</text>
</comment>
<organism>
    <name type="scientific">Histophilus somni (strain 2336)</name>
    <name type="common">Haemophilus somnus</name>
    <dbReference type="NCBI Taxonomy" id="228400"/>
    <lineage>
        <taxon>Bacteria</taxon>
        <taxon>Pseudomonadati</taxon>
        <taxon>Pseudomonadota</taxon>
        <taxon>Gammaproteobacteria</taxon>
        <taxon>Pasteurellales</taxon>
        <taxon>Pasteurellaceae</taxon>
        <taxon>Histophilus</taxon>
    </lineage>
</organism>